<evidence type="ECO:0000255" key="1">
    <source>
        <dbReference type="HAMAP-Rule" id="MF_00058"/>
    </source>
</evidence>
<dbReference type="EC" id="1.5.98.1" evidence="1"/>
<dbReference type="EMBL" id="CP000742">
    <property type="protein sequence ID" value="ABR55257.1"/>
    <property type="molecule type" value="Genomic_DNA"/>
</dbReference>
<dbReference type="RefSeq" id="WP_012066172.1">
    <property type="nucleotide sequence ID" value="NC_009634.1"/>
</dbReference>
<dbReference type="SMR" id="A6URY5"/>
<dbReference type="STRING" id="406327.Mevan_1360"/>
<dbReference type="GeneID" id="5324853"/>
<dbReference type="KEGG" id="mvn:Mevan_1360"/>
<dbReference type="eggNOG" id="arCOG04382">
    <property type="taxonomic scope" value="Archaea"/>
</dbReference>
<dbReference type="HOGENOM" id="CLU_1006890_0_0_2"/>
<dbReference type="OrthoDB" id="49844at2157"/>
<dbReference type="UniPathway" id="UPA00640">
    <property type="reaction ID" value="UER00695"/>
</dbReference>
<dbReference type="Proteomes" id="UP000001107">
    <property type="component" value="Chromosome"/>
</dbReference>
<dbReference type="GO" id="GO:0008901">
    <property type="term" value="F:ferredoxin hydrogenase activity"/>
    <property type="evidence" value="ECO:0007669"/>
    <property type="project" value="InterPro"/>
</dbReference>
<dbReference type="GO" id="GO:0030268">
    <property type="term" value="F:methylenetetrahydromethanopterin dehydrogenase activity"/>
    <property type="evidence" value="ECO:0007669"/>
    <property type="project" value="UniProtKB-UniRule"/>
</dbReference>
<dbReference type="GO" id="GO:0019386">
    <property type="term" value="P:methanogenesis, from carbon dioxide"/>
    <property type="evidence" value="ECO:0007669"/>
    <property type="project" value="UniProtKB-UniRule"/>
</dbReference>
<dbReference type="GO" id="GO:0006730">
    <property type="term" value="P:one-carbon metabolic process"/>
    <property type="evidence" value="ECO:0007669"/>
    <property type="project" value="UniProtKB-UniRule"/>
</dbReference>
<dbReference type="Gene3D" id="6.10.140.120">
    <property type="match status" value="1"/>
</dbReference>
<dbReference type="Gene3D" id="3.40.50.10830">
    <property type="entry name" value="F420-dependent methylenetetrahydromethanopterin dehydrogenase (MTD)"/>
    <property type="match status" value="1"/>
</dbReference>
<dbReference type="HAMAP" id="MF_00058">
    <property type="entry name" value="MTD"/>
    <property type="match status" value="1"/>
</dbReference>
<dbReference type="InterPro" id="IPR002844">
    <property type="entry name" value="MTD"/>
</dbReference>
<dbReference type="InterPro" id="IPR036080">
    <property type="entry name" value="MTD_sf"/>
</dbReference>
<dbReference type="NCBIfam" id="NF002162">
    <property type="entry name" value="PRK00994.1"/>
    <property type="match status" value="1"/>
</dbReference>
<dbReference type="Pfam" id="PF01993">
    <property type="entry name" value="MTD"/>
    <property type="match status" value="1"/>
</dbReference>
<dbReference type="PIRSF" id="PIRSF005627">
    <property type="entry name" value="MTD"/>
    <property type="match status" value="1"/>
</dbReference>
<dbReference type="SUPFAM" id="SSF102324">
    <property type="entry name" value="F420-dependent methylenetetrahydromethanopterin dehydrogenase (MTD)"/>
    <property type="match status" value="1"/>
</dbReference>
<protein>
    <recommendedName>
        <fullName evidence="1">F420-dependent methylenetetrahydromethanopterin dehydrogenase</fullName>
        <shortName evidence="1">MTD</shortName>
        <ecNumber evidence="1">1.5.98.1</ecNumber>
    </recommendedName>
    <alternativeName>
        <fullName evidence="1">Coenzyme F420-dependent N5,N10-methylenetetrahydromethanopterin dehydrogenase</fullName>
    </alternativeName>
</protein>
<feature type="chain" id="PRO_1000007674" description="F420-dependent methylenetetrahydromethanopterin dehydrogenase">
    <location>
        <begin position="1"/>
        <end position="276"/>
    </location>
</feature>
<sequence>MVVKIGILKCGNIGMSPIIDLCLDERADRNDIDVRVLGSGAKMNPDQVEEVSKKMVEEKPDFIVYIGPNPAAPGPKKAREILAASGIPSVIIGDAPGIKDKDAMAEQGLGYVLIKCDPMIGARRQFLDPVEMAMFNADVIRVLAGTGALRVVQNAIDEMVFAVEEGKEISLPKIVITEQKAVDAMDFANPYAKAKAMAAFVMAEKTADIDVKGCFMTKEMEKYIPIVASAHETIRYAAKMVDEARELEKATDAVSRKPHAGDGKILNKCKLMEKPE</sequence>
<comment type="function">
    <text evidence="1">Catalyzes the reversible reduction of methenyl-H(4)MPT(+) to methylene-H(4)MPT.</text>
</comment>
<comment type="catalytic activity">
    <reaction evidence="1">
        <text>5,10-methylenetetrahydromethanopterin + oxidized coenzyme F420-(gamma-L-Glu)(n) + 2 H(+) = 5,10-methenyl-5,6,7,8-tetrahydromethanopterin + reduced coenzyme F420-(gamma-L-Glu)(n)</text>
        <dbReference type="Rhea" id="RHEA:16721"/>
        <dbReference type="Rhea" id="RHEA-COMP:12939"/>
        <dbReference type="Rhea" id="RHEA-COMP:14378"/>
        <dbReference type="ChEBI" id="CHEBI:15378"/>
        <dbReference type="ChEBI" id="CHEBI:57818"/>
        <dbReference type="ChEBI" id="CHEBI:58337"/>
        <dbReference type="ChEBI" id="CHEBI:133980"/>
        <dbReference type="ChEBI" id="CHEBI:139511"/>
        <dbReference type="EC" id="1.5.98.1"/>
    </reaction>
</comment>
<comment type="pathway">
    <text evidence="1">One-carbon metabolism; methanogenesis from CO(2); 5,10-methylene-5,6,7,8-tetrahydromethanopterin from 5,10-methenyl-5,6,7,8-tetrahydromethanopterin (coenzyme F420 route): step 1/1.</text>
</comment>
<comment type="similarity">
    <text evidence="1">Belongs to the MTD family.</text>
</comment>
<organism>
    <name type="scientific">Methanococcus vannielii (strain ATCC 35089 / DSM 1224 / JCM 13029 / OCM 148 / SB)</name>
    <dbReference type="NCBI Taxonomy" id="406327"/>
    <lineage>
        <taxon>Archaea</taxon>
        <taxon>Methanobacteriati</taxon>
        <taxon>Methanobacteriota</taxon>
        <taxon>Methanomada group</taxon>
        <taxon>Methanococci</taxon>
        <taxon>Methanococcales</taxon>
        <taxon>Methanococcaceae</taxon>
        <taxon>Methanococcus</taxon>
    </lineage>
</organism>
<gene>
    <name evidence="1" type="primary">mtd</name>
    <name type="ordered locus">Mevan_1360</name>
</gene>
<accession>A6URY5</accession>
<name>MTD_METVS</name>
<keyword id="KW-0484">Methanogenesis</keyword>
<keyword id="KW-0554">One-carbon metabolism</keyword>
<keyword id="KW-0560">Oxidoreductase</keyword>
<reference key="1">
    <citation type="submission" date="2007-06" db="EMBL/GenBank/DDBJ databases">
        <title>Complete sequence of Methanococcus vannielii SB.</title>
        <authorList>
            <consortium name="US DOE Joint Genome Institute"/>
            <person name="Copeland A."/>
            <person name="Lucas S."/>
            <person name="Lapidus A."/>
            <person name="Barry K."/>
            <person name="Glavina del Rio T."/>
            <person name="Dalin E."/>
            <person name="Tice H."/>
            <person name="Pitluck S."/>
            <person name="Chain P."/>
            <person name="Malfatti S."/>
            <person name="Shin M."/>
            <person name="Vergez L."/>
            <person name="Schmutz J."/>
            <person name="Larimer F."/>
            <person name="Land M."/>
            <person name="Hauser L."/>
            <person name="Kyrpides N."/>
            <person name="Anderson I."/>
            <person name="Sieprawska-Lupa M."/>
            <person name="Whitman W.B."/>
            <person name="Richardson P."/>
        </authorList>
    </citation>
    <scope>NUCLEOTIDE SEQUENCE [LARGE SCALE GENOMIC DNA]</scope>
    <source>
        <strain>ATCC 35089 / DSM 1224 / JCM 13029 / OCM 148 / SB</strain>
    </source>
</reference>
<proteinExistence type="inferred from homology"/>